<organism>
    <name type="scientific">Homo sapiens</name>
    <name type="common">Human</name>
    <dbReference type="NCBI Taxonomy" id="9606"/>
    <lineage>
        <taxon>Eukaryota</taxon>
        <taxon>Metazoa</taxon>
        <taxon>Chordata</taxon>
        <taxon>Craniata</taxon>
        <taxon>Vertebrata</taxon>
        <taxon>Euteleostomi</taxon>
        <taxon>Mammalia</taxon>
        <taxon>Eutheria</taxon>
        <taxon>Euarchontoglires</taxon>
        <taxon>Primates</taxon>
        <taxon>Haplorrhini</taxon>
        <taxon>Catarrhini</taxon>
        <taxon>Hominidae</taxon>
        <taxon>Homo</taxon>
    </lineage>
</organism>
<evidence type="ECO:0000250" key="1"/>
<evidence type="ECO:0000250" key="2">
    <source>
        <dbReference type="UniProtKB" id="Q8BMI4"/>
    </source>
</evidence>
<evidence type="ECO:0000269" key="3">
    <source>
    </source>
</evidence>
<evidence type="ECO:0000269" key="4">
    <source>
    </source>
</evidence>
<evidence type="ECO:0000269" key="5">
    <source>
    </source>
</evidence>
<evidence type="ECO:0000269" key="6">
    <source>
    </source>
</evidence>
<evidence type="ECO:0000269" key="7">
    <source>
    </source>
</evidence>
<evidence type="ECO:0000269" key="8">
    <source>
    </source>
</evidence>
<evidence type="ECO:0000269" key="9">
    <source>
    </source>
</evidence>
<evidence type="ECO:0000269" key="10">
    <source>
    </source>
</evidence>
<evidence type="ECO:0000305" key="11"/>
<evidence type="ECO:0000305" key="12">
    <source>
    </source>
</evidence>
<evidence type="ECO:0000305" key="13">
    <source>
    </source>
</evidence>
<evidence type="ECO:0000305" key="14">
    <source>
    </source>
</evidence>
<evidence type="ECO:0007744" key="15">
    <source>
        <dbReference type="PDB" id="5T9J"/>
    </source>
</evidence>
<evidence type="ECO:0007829" key="16">
    <source>
        <dbReference type="PDB" id="5T9J"/>
    </source>
</evidence>
<comment type="function">
    <text evidence="6 8 9 10">Endonuclease which resolves Holliday junctions (HJs) by the introduction of symmetrically related cuts across the junction point, to produce nicked duplex products in which the nicks can be readily ligated. Four-way DNA intermediates, also known as Holliday junctions, are formed during homologous recombination and DNA repair, and their resolution is necessary for proper chromosome segregation (PubMed:19020614, PubMed:26682650). Cleaves HJs by a nick and counter-nick mechanism involving dual coordinated incisions that lead to the formation of ligatable nicked duplex products. Cleavage of the first strand is rate limiting, while second strand cleavage is rapid. Largely monomeric, dimerizes on the HJ and the first nick occurs upon dimerization at the junction (PubMed:26578604). Efficiently cleaves both single and double HJs contained within large recombination intermediates. Exhibits a weak sequence preference for incision between two G residues that reside in a T-rich region of DNA (PubMed:28049850). Also has endonuclease activity on 5'-flap and replication fork (RF) DNA substrates (PubMed:26578604).</text>
</comment>
<comment type="cofactor">
    <cofactor evidence="13">
        <name>Mg(2+)</name>
        <dbReference type="ChEBI" id="CHEBI:18420"/>
    </cofactor>
    <text evidence="13">Binds 2 magnesium ions per subunit. They probably participate in the reaction catalyzed by the enzyme. May bind an additional third magnesium ion after substrate binding.</text>
</comment>
<comment type="subunit">
    <text evidence="8 9">Largely monomeric, dimerizes on the Holliday junction and the first nick occurs upon dimerization at the junction.</text>
</comment>
<comment type="subcellular location">
    <subcellularLocation>
        <location evidence="12 14">Nucleus</location>
    </subcellularLocation>
</comment>
<comment type="domain">
    <text evidence="9">XPG-N, XPG-I,5'-3' exonuclease domains interact with DNA. Contains a chromodomain that acts as additional DNA interaction site and is required for efficient DNA recognition and cleavage.</text>
</comment>
<comment type="similarity">
    <text evidence="11">Belongs to the XPG/RAD2 endonuclease family. GEN subfamily.</text>
</comment>
<proteinExistence type="evidence at protein level"/>
<keyword id="KW-0002">3D-structure</keyword>
<keyword id="KW-0227">DNA damage</keyword>
<keyword id="KW-0234">DNA repair</keyword>
<keyword id="KW-0255">Endonuclease</keyword>
<keyword id="KW-0378">Hydrolase</keyword>
<keyword id="KW-0460">Magnesium</keyword>
<keyword id="KW-0479">Metal-binding</keyword>
<keyword id="KW-0540">Nuclease</keyword>
<keyword id="KW-0539">Nucleus</keyword>
<keyword id="KW-0597">Phosphoprotein</keyword>
<keyword id="KW-1267">Proteomics identification</keyword>
<keyword id="KW-1185">Reference proteome</keyword>
<accession>Q17RS7</accession>
<accession>Q17RS9</accession>
<accession>Q6ZN37</accession>
<reference key="1">
    <citation type="journal article" date="2004" name="Nat. Genet.">
        <title>Complete sequencing and characterization of 21,243 full-length human cDNAs.</title>
        <authorList>
            <person name="Ota T."/>
            <person name="Suzuki Y."/>
            <person name="Nishikawa T."/>
            <person name="Otsuki T."/>
            <person name="Sugiyama T."/>
            <person name="Irie R."/>
            <person name="Wakamatsu A."/>
            <person name="Hayashi K."/>
            <person name="Sato H."/>
            <person name="Nagai K."/>
            <person name="Kimura K."/>
            <person name="Makita H."/>
            <person name="Sekine M."/>
            <person name="Obayashi M."/>
            <person name="Nishi T."/>
            <person name="Shibahara T."/>
            <person name="Tanaka T."/>
            <person name="Ishii S."/>
            <person name="Yamamoto J."/>
            <person name="Saito K."/>
            <person name="Kawai Y."/>
            <person name="Isono Y."/>
            <person name="Nakamura Y."/>
            <person name="Nagahari K."/>
            <person name="Murakami K."/>
            <person name="Yasuda T."/>
            <person name="Iwayanagi T."/>
            <person name="Wagatsuma M."/>
            <person name="Shiratori A."/>
            <person name="Sudo H."/>
            <person name="Hosoiri T."/>
            <person name="Kaku Y."/>
            <person name="Kodaira H."/>
            <person name="Kondo H."/>
            <person name="Sugawara M."/>
            <person name="Takahashi M."/>
            <person name="Kanda K."/>
            <person name="Yokoi T."/>
            <person name="Furuya T."/>
            <person name="Kikkawa E."/>
            <person name="Omura Y."/>
            <person name="Abe K."/>
            <person name="Kamihara K."/>
            <person name="Katsuta N."/>
            <person name="Sato K."/>
            <person name="Tanikawa M."/>
            <person name="Yamazaki M."/>
            <person name="Ninomiya K."/>
            <person name="Ishibashi T."/>
            <person name="Yamashita H."/>
            <person name="Murakawa K."/>
            <person name="Fujimori K."/>
            <person name="Tanai H."/>
            <person name="Kimata M."/>
            <person name="Watanabe M."/>
            <person name="Hiraoka S."/>
            <person name="Chiba Y."/>
            <person name="Ishida S."/>
            <person name="Ono Y."/>
            <person name="Takiguchi S."/>
            <person name="Watanabe S."/>
            <person name="Yosida M."/>
            <person name="Hotuta T."/>
            <person name="Kusano J."/>
            <person name="Kanehori K."/>
            <person name="Takahashi-Fujii A."/>
            <person name="Hara H."/>
            <person name="Tanase T.-O."/>
            <person name="Nomura Y."/>
            <person name="Togiya S."/>
            <person name="Komai F."/>
            <person name="Hara R."/>
            <person name="Takeuchi K."/>
            <person name="Arita M."/>
            <person name="Imose N."/>
            <person name="Musashino K."/>
            <person name="Yuuki H."/>
            <person name="Oshima A."/>
            <person name="Sasaki N."/>
            <person name="Aotsuka S."/>
            <person name="Yoshikawa Y."/>
            <person name="Matsunawa H."/>
            <person name="Ichihara T."/>
            <person name="Shiohata N."/>
            <person name="Sano S."/>
            <person name="Moriya S."/>
            <person name="Momiyama H."/>
            <person name="Satoh N."/>
            <person name="Takami S."/>
            <person name="Terashima Y."/>
            <person name="Suzuki O."/>
            <person name="Nakagawa S."/>
            <person name="Senoh A."/>
            <person name="Mizoguchi H."/>
            <person name="Goto Y."/>
            <person name="Shimizu F."/>
            <person name="Wakebe H."/>
            <person name="Hishigaki H."/>
            <person name="Watanabe T."/>
            <person name="Sugiyama A."/>
            <person name="Takemoto M."/>
            <person name="Kawakami B."/>
            <person name="Yamazaki M."/>
            <person name="Watanabe K."/>
            <person name="Kumagai A."/>
            <person name="Itakura S."/>
            <person name="Fukuzumi Y."/>
            <person name="Fujimori Y."/>
            <person name="Komiyama M."/>
            <person name="Tashiro H."/>
            <person name="Tanigami A."/>
            <person name="Fujiwara T."/>
            <person name="Ono T."/>
            <person name="Yamada K."/>
            <person name="Fujii Y."/>
            <person name="Ozaki K."/>
            <person name="Hirao M."/>
            <person name="Ohmori Y."/>
            <person name="Kawabata A."/>
            <person name="Hikiji T."/>
            <person name="Kobatake N."/>
            <person name="Inagaki H."/>
            <person name="Ikema Y."/>
            <person name="Okamoto S."/>
            <person name="Okitani R."/>
            <person name="Kawakami T."/>
            <person name="Noguchi S."/>
            <person name="Itoh T."/>
            <person name="Shigeta K."/>
            <person name="Senba T."/>
            <person name="Matsumura K."/>
            <person name="Nakajima Y."/>
            <person name="Mizuno T."/>
            <person name="Morinaga M."/>
            <person name="Sasaki M."/>
            <person name="Togashi T."/>
            <person name="Oyama M."/>
            <person name="Hata H."/>
            <person name="Watanabe M."/>
            <person name="Komatsu T."/>
            <person name="Mizushima-Sugano J."/>
            <person name="Satoh T."/>
            <person name="Shirai Y."/>
            <person name="Takahashi Y."/>
            <person name="Nakagawa K."/>
            <person name="Okumura K."/>
            <person name="Nagase T."/>
            <person name="Nomura N."/>
            <person name="Kikuchi H."/>
            <person name="Masuho Y."/>
            <person name="Yamashita R."/>
            <person name="Nakai K."/>
            <person name="Yada T."/>
            <person name="Nakamura Y."/>
            <person name="Ohara O."/>
            <person name="Isogai T."/>
            <person name="Sugano S."/>
        </authorList>
    </citation>
    <scope>NUCLEOTIDE SEQUENCE [LARGE SCALE MRNA]</scope>
    <scope>VARIANTS THR-92; ASN-310; ILE-680 AND CYS-898</scope>
    <source>
        <tissue>Hippocampus</tissue>
    </source>
</reference>
<reference key="2">
    <citation type="journal article" date="2005" name="Nature">
        <title>Generation and annotation of the DNA sequences of human chromosomes 2 and 4.</title>
        <authorList>
            <person name="Hillier L.W."/>
            <person name="Graves T.A."/>
            <person name="Fulton R.S."/>
            <person name="Fulton L.A."/>
            <person name="Pepin K.H."/>
            <person name="Minx P."/>
            <person name="Wagner-McPherson C."/>
            <person name="Layman D."/>
            <person name="Wylie K."/>
            <person name="Sekhon M."/>
            <person name="Becker M.C."/>
            <person name="Fewell G.A."/>
            <person name="Delehaunty K.D."/>
            <person name="Miner T.L."/>
            <person name="Nash W.E."/>
            <person name="Kremitzki C."/>
            <person name="Oddy L."/>
            <person name="Du H."/>
            <person name="Sun H."/>
            <person name="Bradshaw-Cordum H."/>
            <person name="Ali J."/>
            <person name="Carter J."/>
            <person name="Cordes M."/>
            <person name="Harris A."/>
            <person name="Isak A."/>
            <person name="van Brunt A."/>
            <person name="Nguyen C."/>
            <person name="Du F."/>
            <person name="Courtney L."/>
            <person name="Kalicki J."/>
            <person name="Ozersky P."/>
            <person name="Abbott S."/>
            <person name="Armstrong J."/>
            <person name="Belter E.A."/>
            <person name="Caruso L."/>
            <person name="Cedroni M."/>
            <person name="Cotton M."/>
            <person name="Davidson T."/>
            <person name="Desai A."/>
            <person name="Elliott G."/>
            <person name="Erb T."/>
            <person name="Fronick C."/>
            <person name="Gaige T."/>
            <person name="Haakenson W."/>
            <person name="Haglund K."/>
            <person name="Holmes A."/>
            <person name="Harkins R."/>
            <person name="Kim K."/>
            <person name="Kruchowski S.S."/>
            <person name="Strong C.M."/>
            <person name="Grewal N."/>
            <person name="Goyea E."/>
            <person name="Hou S."/>
            <person name="Levy A."/>
            <person name="Martinka S."/>
            <person name="Mead K."/>
            <person name="McLellan M.D."/>
            <person name="Meyer R."/>
            <person name="Randall-Maher J."/>
            <person name="Tomlinson C."/>
            <person name="Dauphin-Kohlberg S."/>
            <person name="Kozlowicz-Reilly A."/>
            <person name="Shah N."/>
            <person name="Swearengen-Shahid S."/>
            <person name="Snider J."/>
            <person name="Strong J.T."/>
            <person name="Thompson J."/>
            <person name="Yoakum M."/>
            <person name="Leonard S."/>
            <person name="Pearman C."/>
            <person name="Trani L."/>
            <person name="Radionenko M."/>
            <person name="Waligorski J.E."/>
            <person name="Wang C."/>
            <person name="Rock S.M."/>
            <person name="Tin-Wollam A.-M."/>
            <person name="Maupin R."/>
            <person name="Latreille P."/>
            <person name="Wendl M.C."/>
            <person name="Yang S.-P."/>
            <person name="Pohl C."/>
            <person name="Wallis J.W."/>
            <person name="Spieth J."/>
            <person name="Bieri T.A."/>
            <person name="Berkowicz N."/>
            <person name="Nelson J.O."/>
            <person name="Osborne J."/>
            <person name="Ding L."/>
            <person name="Meyer R."/>
            <person name="Sabo A."/>
            <person name="Shotland Y."/>
            <person name="Sinha P."/>
            <person name="Wohldmann P.E."/>
            <person name="Cook L.L."/>
            <person name="Hickenbotham M.T."/>
            <person name="Eldred J."/>
            <person name="Williams D."/>
            <person name="Jones T.A."/>
            <person name="She X."/>
            <person name="Ciccarelli F.D."/>
            <person name="Izaurralde E."/>
            <person name="Taylor J."/>
            <person name="Schmutz J."/>
            <person name="Myers R.M."/>
            <person name="Cox D.R."/>
            <person name="Huang X."/>
            <person name="McPherson J.D."/>
            <person name="Mardis E.R."/>
            <person name="Clifton S.W."/>
            <person name="Warren W.C."/>
            <person name="Chinwalla A.T."/>
            <person name="Eddy S.R."/>
            <person name="Marra M.A."/>
            <person name="Ovcharenko I."/>
            <person name="Furey T.S."/>
            <person name="Miller W."/>
            <person name="Eichler E.E."/>
            <person name="Bork P."/>
            <person name="Suyama M."/>
            <person name="Torrents D."/>
            <person name="Waterston R.H."/>
            <person name="Wilson R.K."/>
        </authorList>
    </citation>
    <scope>NUCLEOTIDE SEQUENCE [LARGE SCALE GENOMIC DNA]</scope>
</reference>
<reference key="3">
    <citation type="journal article" date="2004" name="Genome Res.">
        <title>The status, quality, and expansion of the NIH full-length cDNA project: the Mammalian Gene Collection (MGC).</title>
        <authorList>
            <consortium name="The MGC Project Team"/>
        </authorList>
    </citation>
    <scope>NUCLEOTIDE SEQUENCE [LARGE SCALE MRNA]</scope>
    <scope>VARIANTS THR-92; ASN-310 AND ILE-680</scope>
    <source>
        <tissue>Brain</tissue>
    </source>
</reference>
<reference key="4">
    <citation type="journal article" date="2008" name="Nature">
        <title>Identification of Holliday junction resolvases from humans and yeast.</title>
        <authorList>
            <person name="Ip S.C."/>
            <person name="Rass U."/>
            <person name="Blanco M.G."/>
            <person name="Flynn H.R."/>
            <person name="Skehel J.M."/>
            <person name="West S.C."/>
        </authorList>
    </citation>
    <scope>IDENTIFICATION BY MASS SPECTROMETRY</scope>
    <scope>FUNCTION</scope>
</reference>
<reference key="5">
    <citation type="journal article" date="2015" name="Nucleic Acids Res.">
        <title>GEN1 promotes Holliday junction resolution by a coordinated nick and counter-nick mechanism.</title>
        <authorList>
            <person name="Chan Y.W."/>
            <person name="West S."/>
        </authorList>
    </citation>
    <scope>FUNCTION</scope>
    <scope>SUBUNIT</scope>
    <scope>MUTAGENESIS OF 134-GLU--GLU-136</scope>
    <scope>DNA-BINDING</scope>
</reference>
<reference key="6">
    <citation type="journal article" date="2017" name="Proc. Natl. Acad. Sci. U.S.A.">
        <title>Resolution of single and double Holliday junction recombination intermediates by GEN1.</title>
        <authorList>
            <person name="Shah Punatar R."/>
            <person name="Martin M.J."/>
            <person name="Wyatt H.D."/>
            <person name="Chan Y.W."/>
            <person name="West S.C."/>
        </authorList>
    </citation>
    <scope>FUNCTION</scope>
    <scope>DNA-BINDING</scope>
</reference>
<reference evidence="15" key="7">
    <citation type="journal article" date="2015" name="Elife">
        <title>Human Holliday junction resolvase GEN1 uses a chromodomain for efficient DNA recognition and cleavage.</title>
        <authorList>
            <person name="Lee S.H."/>
            <person name="Princz L.N."/>
            <person name="Klugel M.F."/>
            <person name="Habermann B."/>
            <person name="Pfander B."/>
            <person name="Biertumpfel C."/>
        </authorList>
    </citation>
    <scope>X-RAY CRYSTALLOGRAPHY (3.00 ANGSTROMS) OF 1-505 OF MUTATED AT ASP-30 IN COMPLEX WITH DNA AND MAGNESIUM</scope>
    <scope>COFACTOR</scope>
    <scope>DOMAIN</scope>
    <scope>MUTAGENESIS OF ASP-30; CYS-36; ARG-54; ARG-89; ARG-93; HIS-109; PHE-110; THR-380; LYS-404; ARG-406 AND THR-438</scope>
    <scope>FUNCTION</scope>
    <scope>SUBUNIT</scope>
    <scope>DNA-BINDING</scope>
</reference>
<reference key="8">
    <citation type="journal article" date="2006" name="Science">
        <title>The consensus coding sequences of human breast and colorectal cancers.</title>
        <authorList>
            <person name="Sjoeblom T."/>
            <person name="Jones S."/>
            <person name="Wood L.D."/>
            <person name="Parsons D.W."/>
            <person name="Lin J."/>
            <person name="Barber T.D."/>
            <person name="Mandelker D."/>
            <person name="Leary R.J."/>
            <person name="Ptak J."/>
            <person name="Silliman N."/>
            <person name="Szabo S."/>
            <person name="Buckhaults P."/>
            <person name="Farrell C."/>
            <person name="Meeh P."/>
            <person name="Markowitz S.D."/>
            <person name="Willis J."/>
            <person name="Dawson D."/>
            <person name="Willson J.K.V."/>
            <person name="Gazdar A.F."/>
            <person name="Hartigan J."/>
            <person name="Wu L."/>
            <person name="Liu C."/>
            <person name="Parmigiani G."/>
            <person name="Park B.H."/>
            <person name="Bachman K.E."/>
            <person name="Papadopoulos N."/>
            <person name="Vogelstein B."/>
            <person name="Kinzler K.W."/>
            <person name="Velculescu V.E."/>
        </authorList>
    </citation>
    <scope>VARIANT [LARGE SCALE ANALYSIS] LEU-275</scope>
</reference>
<reference key="9">
    <citation type="journal article" date="2011" name="Nature">
        <title>Exome sequencing identifies frequent mutation of the SWI/SNF complex gene PBRM1 in renal carcinoma.</title>
        <authorList>
            <person name="Varela I."/>
            <person name="Tarpey P."/>
            <person name="Raine K."/>
            <person name="Huang D."/>
            <person name="Ong C.K."/>
            <person name="Stephens P."/>
            <person name="Davies H."/>
            <person name="Jones D."/>
            <person name="Lin M.L."/>
            <person name="Teague J."/>
            <person name="Bignell G."/>
            <person name="Butler A."/>
            <person name="Cho J."/>
            <person name="Dalgliesh G.L."/>
            <person name="Galappaththige D."/>
            <person name="Greenman C."/>
            <person name="Hardy C."/>
            <person name="Jia M."/>
            <person name="Latimer C."/>
            <person name="Lau K.W."/>
            <person name="Marshall J."/>
            <person name="McLaren S."/>
            <person name="Menzies A."/>
            <person name="Mudie L."/>
            <person name="Stebbings L."/>
            <person name="Largaespada D.A."/>
            <person name="Wessels L.F.A."/>
            <person name="Richard S."/>
            <person name="Kahnoski R.J."/>
            <person name="Anema J."/>
            <person name="Tuveson D.A."/>
            <person name="Perez-Mancera P.A."/>
            <person name="Mustonen V."/>
            <person name="Fischer A."/>
            <person name="Adams D.J."/>
            <person name="Rust A."/>
            <person name="Chan-On W."/>
            <person name="Subimerb C."/>
            <person name="Dykema K."/>
            <person name="Furge K."/>
            <person name="Campbell P.J."/>
            <person name="Teh B.T."/>
            <person name="Stratton M.R."/>
            <person name="Futreal P.A."/>
        </authorList>
    </citation>
    <scope>VARIANT ARG-766</scope>
</reference>
<dbReference type="EC" id="3.1.-.-"/>
<dbReference type="EMBL" id="AK131387">
    <property type="protein sequence ID" value="BAD18538.1"/>
    <property type="molecule type" value="mRNA"/>
</dbReference>
<dbReference type="EMBL" id="AC093731">
    <property type="status" value="NOT_ANNOTATED_CDS"/>
    <property type="molecule type" value="Genomic_DNA"/>
</dbReference>
<dbReference type="EMBL" id="BC117204">
    <property type="protein sequence ID" value="AAI17205.1"/>
    <property type="molecule type" value="mRNA"/>
</dbReference>
<dbReference type="EMBL" id="BC117206">
    <property type="protein sequence ID" value="AAI17207.1"/>
    <property type="molecule type" value="mRNA"/>
</dbReference>
<dbReference type="CCDS" id="CCDS1691.1"/>
<dbReference type="RefSeq" id="NP_001123481.3">
    <property type="nucleotide sequence ID" value="NM_001130009.3"/>
</dbReference>
<dbReference type="RefSeq" id="NP_872431.4">
    <property type="nucleotide sequence ID" value="NM_182625.4"/>
</dbReference>
<dbReference type="RefSeq" id="XP_005262670.1">
    <property type="nucleotide sequence ID" value="XM_005262613.5"/>
</dbReference>
<dbReference type="RefSeq" id="XP_006712068.1">
    <property type="nucleotide sequence ID" value="XM_006712005.4"/>
</dbReference>
<dbReference type="RefSeq" id="XP_011531122.1">
    <property type="nucleotide sequence ID" value="XM_011532820.3"/>
</dbReference>
<dbReference type="RefSeq" id="XP_011531123.1">
    <property type="nucleotide sequence ID" value="XM_011532821.3"/>
</dbReference>
<dbReference type="RefSeq" id="XP_011531124.1">
    <property type="nucleotide sequence ID" value="XM_011532822.3"/>
</dbReference>
<dbReference type="RefSeq" id="XP_047300103.1">
    <property type="nucleotide sequence ID" value="XM_047444147.1"/>
</dbReference>
<dbReference type="PDB" id="5T9J">
    <property type="method" value="X-ray"/>
    <property type="resolution" value="3.00 A"/>
    <property type="chains" value="A/B=1-505"/>
</dbReference>
<dbReference type="PDBsum" id="5T9J"/>
<dbReference type="SMR" id="Q17RS7"/>
<dbReference type="BioGRID" id="131526">
    <property type="interactions" value="35"/>
</dbReference>
<dbReference type="FunCoup" id="Q17RS7">
    <property type="interactions" value="1010"/>
</dbReference>
<dbReference type="IntAct" id="Q17RS7">
    <property type="interactions" value="10"/>
</dbReference>
<dbReference type="MINT" id="Q17RS7"/>
<dbReference type="STRING" id="9606.ENSP00000370653"/>
<dbReference type="GlyGen" id="Q17RS7">
    <property type="glycosylation" value="4 sites, 1 O-linked glycan (4 sites)"/>
</dbReference>
<dbReference type="iPTMnet" id="Q17RS7"/>
<dbReference type="PhosphoSitePlus" id="Q17RS7"/>
<dbReference type="BioMuta" id="GEN1"/>
<dbReference type="DMDM" id="290457644"/>
<dbReference type="jPOST" id="Q17RS7"/>
<dbReference type="MassIVE" id="Q17RS7"/>
<dbReference type="PaxDb" id="9606-ENSP00000318977"/>
<dbReference type="PeptideAtlas" id="Q17RS7"/>
<dbReference type="ProteomicsDB" id="61166"/>
<dbReference type="Pumba" id="Q17RS7"/>
<dbReference type="Antibodypedia" id="56005">
    <property type="antibodies" value="102 antibodies from 22 providers"/>
</dbReference>
<dbReference type="DNASU" id="348654"/>
<dbReference type="Ensembl" id="ENST00000317402.11">
    <property type="protein sequence ID" value="ENSP00000318977.7"/>
    <property type="gene ID" value="ENSG00000178295.15"/>
</dbReference>
<dbReference type="Ensembl" id="ENST00000381254.7">
    <property type="protein sequence ID" value="ENSP00000370653.2"/>
    <property type="gene ID" value="ENSG00000178295.15"/>
</dbReference>
<dbReference type="GeneID" id="348654"/>
<dbReference type="KEGG" id="hsa:348654"/>
<dbReference type="MANE-Select" id="ENST00000381254.7">
    <property type="protein sequence ID" value="ENSP00000370653.2"/>
    <property type="RefSeq nucleotide sequence ID" value="NM_001130009.3"/>
    <property type="RefSeq protein sequence ID" value="NP_001123481.3"/>
</dbReference>
<dbReference type="UCSC" id="uc002rct.3">
    <property type="organism name" value="human"/>
</dbReference>
<dbReference type="AGR" id="HGNC:26881"/>
<dbReference type="CTD" id="348654"/>
<dbReference type="DisGeNET" id="348654"/>
<dbReference type="GeneCards" id="GEN1"/>
<dbReference type="HGNC" id="HGNC:26881">
    <property type="gene designation" value="GEN1"/>
</dbReference>
<dbReference type="HPA" id="ENSG00000178295">
    <property type="expression patterns" value="Low tissue specificity"/>
</dbReference>
<dbReference type="MalaCards" id="GEN1"/>
<dbReference type="MIM" id="612449">
    <property type="type" value="gene"/>
</dbReference>
<dbReference type="neXtProt" id="NX_Q17RS7"/>
<dbReference type="OpenTargets" id="ENSG00000178295"/>
<dbReference type="PharmGKB" id="PA162389359"/>
<dbReference type="VEuPathDB" id="HostDB:ENSG00000178295"/>
<dbReference type="eggNOG" id="KOG2519">
    <property type="taxonomic scope" value="Eukaryota"/>
</dbReference>
<dbReference type="GeneTree" id="ENSGT00940000159266"/>
<dbReference type="HOGENOM" id="CLU_013777_0_0_1"/>
<dbReference type="InParanoid" id="Q17RS7"/>
<dbReference type="OMA" id="CKSDRYC"/>
<dbReference type="OrthoDB" id="2959108at2759"/>
<dbReference type="PAN-GO" id="Q17RS7">
    <property type="GO annotations" value="2 GO annotations based on evolutionary models"/>
</dbReference>
<dbReference type="PhylomeDB" id="Q17RS7"/>
<dbReference type="TreeFam" id="TF323403"/>
<dbReference type="BRENDA" id="3.1.21.10">
    <property type="organism ID" value="2681"/>
</dbReference>
<dbReference type="PathwayCommons" id="Q17RS7"/>
<dbReference type="Reactome" id="R-HSA-5693568">
    <property type="pathway name" value="Resolution of D-loop Structures through Holliday Junction Intermediates"/>
</dbReference>
<dbReference type="SignaLink" id="Q17RS7"/>
<dbReference type="SIGNOR" id="Q17RS7"/>
<dbReference type="BioGRID-ORCS" id="348654">
    <property type="hits" value="55 hits in 1161 CRISPR screens"/>
</dbReference>
<dbReference type="CD-CODE" id="8C2F96ED">
    <property type="entry name" value="Centrosome"/>
</dbReference>
<dbReference type="ChiTaRS" id="GEN1">
    <property type="organism name" value="human"/>
</dbReference>
<dbReference type="GenomeRNAi" id="348654"/>
<dbReference type="Pharos" id="Q17RS7">
    <property type="development level" value="Tbio"/>
</dbReference>
<dbReference type="PRO" id="PR:Q17RS7"/>
<dbReference type="Proteomes" id="UP000005640">
    <property type="component" value="Chromosome 2"/>
</dbReference>
<dbReference type="RNAct" id="Q17RS7">
    <property type="molecule type" value="protein"/>
</dbReference>
<dbReference type="Bgee" id="ENSG00000178295">
    <property type="expression patterns" value="Expressed in male germ line stem cell (sensu Vertebrata) in testis and 159 other cell types or tissues"/>
</dbReference>
<dbReference type="ExpressionAtlas" id="Q17RS7">
    <property type="expression patterns" value="baseline and differential"/>
</dbReference>
<dbReference type="GO" id="GO:0005813">
    <property type="term" value="C:centrosome"/>
    <property type="evidence" value="ECO:0000314"/>
    <property type="project" value="UniProtKB"/>
</dbReference>
<dbReference type="GO" id="GO:0005654">
    <property type="term" value="C:nucleoplasm"/>
    <property type="evidence" value="ECO:0000304"/>
    <property type="project" value="Reactome"/>
</dbReference>
<dbReference type="GO" id="GO:0017108">
    <property type="term" value="F:5'-flap endonuclease activity"/>
    <property type="evidence" value="ECO:0000314"/>
    <property type="project" value="UniProtKB"/>
</dbReference>
<dbReference type="GO" id="GO:0008821">
    <property type="term" value="F:crossover junction DNA endonuclease activity"/>
    <property type="evidence" value="ECO:0000314"/>
    <property type="project" value="UniProtKB"/>
</dbReference>
<dbReference type="GO" id="GO:0000400">
    <property type="term" value="F:four-way junction DNA binding"/>
    <property type="evidence" value="ECO:0000314"/>
    <property type="project" value="UniProtKB"/>
</dbReference>
<dbReference type="GO" id="GO:0000287">
    <property type="term" value="F:magnesium ion binding"/>
    <property type="evidence" value="ECO:0000314"/>
    <property type="project" value="UniProtKB"/>
</dbReference>
<dbReference type="GO" id="GO:0042803">
    <property type="term" value="F:protein homodimerization activity"/>
    <property type="evidence" value="ECO:0000314"/>
    <property type="project" value="UniProtKB"/>
</dbReference>
<dbReference type="GO" id="GO:0000724">
    <property type="term" value="P:double-strand break repair via homologous recombination"/>
    <property type="evidence" value="ECO:0000315"/>
    <property type="project" value="UniProtKB"/>
</dbReference>
<dbReference type="GO" id="GO:0090267">
    <property type="term" value="P:positive regulation of mitotic cell cycle spindle assembly checkpoint"/>
    <property type="evidence" value="ECO:0000315"/>
    <property type="project" value="UniProtKB"/>
</dbReference>
<dbReference type="GO" id="GO:0010824">
    <property type="term" value="P:regulation of centrosome duplication"/>
    <property type="evidence" value="ECO:0000315"/>
    <property type="project" value="UniProtKB"/>
</dbReference>
<dbReference type="GO" id="GO:0031297">
    <property type="term" value="P:replication fork processing"/>
    <property type="evidence" value="ECO:0000314"/>
    <property type="project" value="UniProtKB"/>
</dbReference>
<dbReference type="GO" id="GO:0071139">
    <property type="term" value="P:resolution of DNA recombination intermediates"/>
    <property type="evidence" value="ECO:0000315"/>
    <property type="project" value="UniProtKB"/>
</dbReference>
<dbReference type="GO" id="GO:0071140">
    <property type="term" value="P:resolution of mitotic recombination intermediates"/>
    <property type="evidence" value="ECO:0000315"/>
    <property type="project" value="UniProtKB"/>
</dbReference>
<dbReference type="CDD" id="cd09905">
    <property type="entry name" value="H3TH_GEN1"/>
    <property type="match status" value="1"/>
</dbReference>
<dbReference type="CDD" id="cd09869">
    <property type="entry name" value="PIN_GEN1"/>
    <property type="match status" value="1"/>
</dbReference>
<dbReference type="FunFam" id="3.40.50.1010:FF:000024">
    <property type="entry name" value="flap endonuclease GEN homolog 1"/>
    <property type="match status" value="1"/>
</dbReference>
<dbReference type="FunFam" id="1.10.150.20:FF:000030">
    <property type="entry name" value="Flap endonuclease GEN-like 1"/>
    <property type="match status" value="1"/>
</dbReference>
<dbReference type="Gene3D" id="1.10.150.20">
    <property type="entry name" value="5' to 3' exonuclease, C-terminal subdomain"/>
    <property type="match status" value="1"/>
</dbReference>
<dbReference type="Gene3D" id="3.40.50.1010">
    <property type="entry name" value="5'-nuclease"/>
    <property type="match status" value="1"/>
</dbReference>
<dbReference type="InterPro" id="IPR036279">
    <property type="entry name" value="5-3_exonuclease_C_sf"/>
</dbReference>
<dbReference type="InterPro" id="IPR041012">
    <property type="entry name" value="GEN_chromo"/>
</dbReference>
<dbReference type="InterPro" id="IPR008918">
    <property type="entry name" value="HhH2"/>
</dbReference>
<dbReference type="InterPro" id="IPR029060">
    <property type="entry name" value="PIN-like_dom_sf"/>
</dbReference>
<dbReference type="InterPro" id="IPR006086">
    <property type="entry name" value="XPG-I_dom"/>
</dbReference>
<dbReference type="InterPro" id="IPR006084">
    <property type="entry name" value="XPG/Rad2"/>
</dbReference>
<dbReference type="InterPro" id="IPR006085">
    <property type="entry name" value="XPG_DNA_repair_N"/>
</dbReference>
<dbReference type="PANTHER" id="PTHR11081">
    <property type="entry name" value="FLAP ENDONUCLEASE FAMILY MEMBER"/>
    <property type="match status" value="1"/>
</dbReference>
<dbReference type="PANTHER" id="PTHR11081:SF70">
    <property type="entry name" value="FLAP ENDONUCLEASE GEN HOMOLOG 1"/>
    <property type="match status" value="1"/>
</dbReference>
<dbReference type="Pfam" id="PF18704">
    <property type="entry name" value="Chromo_2"/>
    <property type="match status" value="1"/>
</dbReference>
<dbReference type="Pfam" id="PF00867">
    <property type="entry name" value="XPG_I"/>
    <property type="match status" value="1"/>
</dbReference>
<dbReference type="Pfam" id="PF00752">
    <property type="entry name" value="XPG_N"/>
    <property type="match status" value="1"/>
</dbReference>
<dbReference type="PRINTS" id="PR00853">
    <property type="entry name" value="XPGRADSUPER"/>
</dbReference>
<dbReference type="SMART" id="SM00279">
    <property type="entry name" value="HhH2"/>
    <property type="match status" value="1"/>
</dbReference>
<dbReference type="SMART" id="SM00484">
    <property type="entry name" value="XPGI"/>
    <property type="match status" value="1"/>
</dbReference>
<dbReference type="SMART" id="SM00485">
    <property type="entry name" value="XPGN"/>
    <property type="match status" value="1"/>
</dbReference>
<dbReference type="SUPFAM" id="SSF47807">
    <property type="entry name" value="5' to 3' exonuclease, C-terminal subdomain"/>
    <property type="match status" value="1"/>
</dbReference>
<dbReference type="SUPFAM" id="SSF88723">
    <property type="entry name" value="PIN domain-like"/>
    <property type="match status" value="1"/>
</dbReference>
<name>GEN_HUMAN</name>
<feature type="chain" id="PRO_0000314146" description="Flap endonuclease GEN homolog 1">
    <location>
        <begin position="1"/>
        <end position="908"/>
    </location>
</feature>
<feature type="region of interest" description="XPG-N domain" evidence="9">
    <location>
        <begin position="2"/>
        <end position="96"/>
    </location>
</feature>
<feature type="region of interest" description="XPG-I domain" evidence="9">
    <location>
        <begin position="122"/>
        <end position="208"/>
    </location>
</feature>
<feature type="region of interest" description="5'-3' exonuclease domain" evidence="9">
    <location>
        <begin position="208"/>
        <end position="384"/>
    </location>
</feature>
<feature type="region of interest" description="Chromodomain" evidence="9">
    <location>
        <begin position="390"/>
        <end position="464"/>
    </location>
</feature>
<feature type="binding site" evidence="1">
    <location>
        <position position="30"/>
    </location>
    <ligand>
        <name>Mg(2+)</name>
        <dbReference type="ChEBI" id="CHEBI:18420"/>
        <label>1</label>
    </ligand>
</feature>
<feature type="binding site" evidence="9 15">
    <location>
        <position position="75"/>
    </location>
    <ligand>
        <name>Mg(2+)</name>
        <dbReference type="ChEBI" id="CHEBI:18420"/>
        <label>1</label>
    </ligand>
</feature>
<feature type="binding site" evidence="9 15">
    <location>
        <position position="134"/>
    </location>
    <ligand>
        <name>Mg(2+)</name>
        <dbReference type="ChEBI" id="CHEBI:18420"/>
        <label>1</label>
    </ligand>
</feature>
<feature type="binding site" evidence="1">
    <location>
        <position position="136"/>
    </location>
    <ligand>
        <name>Mg(2+)</name>
        <dbReference type="ChEBI" id="CHEBI:18420"/>
        <label>1</label>
    </ligand>
</feature>
<feature type="binding site" evidence="1">
    <location>
        <position position="155"/>
    </location>
    <ligand>
        <name>Mg(2+)</name>
        <dbReference type="ChEBI" id="CHEBI:18420"/>
        <label>2</label>
    </ligand>
</feature>
<feature type="binding site" evidence="1">
    <location>
        <position position="157"/>
    </location>
    <ligand>
        <name>Mg(2+)</name>
        <dbReference type="ChEBI" id="CHEBI:18420"/>
        <label>2</label>
    </ligand>
</feature>
<feature type="binding site" evidence="1">
    <location>
        <position position="208"/>
    </location>
    <ligand>
        <name>Mg(2+)</name>
        <dbReference type="ChEBI" id="CHEBI:18420"/>
        <label>2</label>
    </ligand>
</feature>
<feature type="modified residue" description="Phosphoserine" evidence="2">
    <location>
        <position position="801"/>
    </location>
</feature>
<feature type="modified residue" description="Phosphoserine" evidence="2">
    <location>
        <position position="802"/>
    </location>
</feature>
<feature type="sequence variant" id="VAR_037844" description="In dbSNP:rs1812152." evidence="3 4">
    <original>S</original>
    <variation>T</variation>
    <location>
        <position position="92"/>
    </location>
</feature>
<feature type="sequence variant" id="VAR_037845" description="In dbSNP:rs16981869.">
    <original>N</original>
    <variation>S</variation>
    <location>
        <position position="143"/>
    </location>
</feature>
<feature type="sequence variant" id="VAR_037846" description="In dbSNP:rs10177628.">
    <original>I</original>
    <variation>V</variation>
    <location>
        <position position="203"/>
    </location>
</feature>
<feature type="sequence variant" id="VAR_037847" description="In a breast cancer sample; somatic mutation." evidence="5">
    <original>R</original>
    <variation>L</variation>
    <location>
        <position position="275"/>
    </location>
</feature>
<feature type="sequence variant" id="VAR_037848" description="In dbSNP:rs300175." evidence="3 4">
    <original>S</original>
    <variation>N</variation>
    <location>
        <position position="310"/>
    </location>
</feature>
<feature type="sequence variant" id="VAR_037849" description="In dbSNP:rs300169." evidence="3 4">
    <original>T</original>
    <variation>I</variation>
    <location>
        <position position="680"/>
    </location>
</feature>
<feature type="sequence variant" id="VAR_064715" description="Found in a renal cell carcinoma case; somatic mutation." evidence="7">
    <original>C</original>
    <variation>R</variation>
    <location>
        <position position="766"/>
    </location>
</feature>
<feature type="sequence variant" id="VAR_037850" description="In dbSNP:rs17315702." evidence="3">
    <original>R</original>
    <variation>C</variation>
    <location>
        <position position="898"/>
    </location>
</feature>
<feature type="mutagenesis site" description="Abolishes endonuclease activity on both Hollyday junctions and 5' flap substrates." evidence="9">
    <original>D</original>
    <variation>N</variation>
    <location>
        <position position="30"/>
    </location>
</feature>
<feature type="mutagenesis site" description="Abolishes endonuclease activity on both Hollyday junctions and 5' flap substrates." evidence="9">
    <original>C</original>
    <variation>E</variation>
    <location>
        <position position="36"/>
    </location>
</feature>
<feature type="mutagenesis site" description="Reduces by 50% endonuclease activity on both Hollyday junctions and 5' flap substrates." evidence="9">
    <original>R</original>
    <variation>E</variation>
    <location>
        <position position="54"/>
    </location>
</feature>
<feature type="mutagenesis site" description="No effect on endonuclease activity on Hollyday junctions. Slightly reduces endonuclease activity on 5' flap substrates." evidence="9">
    <original>R</original>
    <variation>E</variation>
    <location>
        <position position="89"/>
    </location>
</feature>
<feature type="mutagenesis site" description="No effect on endonuclease activity on Hollyday junctions. Slightly reduces endonuclease activity on 5' flap substrates." evidence="9">
    <original>R</original>
    <variation>E</variation>
    <location>
        <position position="93"/>
    </location>
</feature>
<feature type="mutagenesis site" description="Strongly reduces endonuclease activity on both Hollyday junctions and 5' flap substrates." evidence="9">
    <original>H</original>
    <variation>E</variation>
    <location>
        <position position="109"/>
    </location>
</feature>
<feature type="mutagenesis site" description="Reduces by 25% endonuclease activity on Hollyday junctions and by 65% on 5' flap substrates." evidence="9">
    <original>F</original>
    <variation>E</variation>
    <location>
        <position position="110"/>
    </location>
</feature>
<feature type="mutagenesis site" description="Abolishes endonuclease activity." evidence="8">
    <original>EAE</original>
    <variation>AAA</variation>
    <location>
        <begin position="134"/>
        <end position="136"/>
    </location>
</feature>
<feature type="mutagenesis site" description="No effect on endonuclease activity on both Hollyday junctions and 5' flap substrates." evidence="9">
    <original>T</original>
    <variation>E</variation>
    <location>
        <position position="380"/>
    </location>
</feature>
<feature type="mutagenesis site" description="No effect on endonuclease activity on both Hollyday junctions and 5' flap substrates." evidence="9">
    <original>K</original>
    <variation>E</variation>
    <location>
        <position position="404"/>
    </location>
</feature>
<feature type="mutagenesis site" description="No effect on endonuclease activity on both Hollyday junctions and 5' flap substrates." evidence="9">
    <original>R</original>
    <variation>E</variation>
    <location>
        <position position="406"/>
    </location>
</feature>
<feature type="mutagenesis site" description="No effect on endonuclease activity on both Hollyday junctions and 5' flap substrates." evidence="9">
    <original>T</original>
    <variation>E</variation>
    <location>
        <position position="438"/>
    </location>
</feature>
<feature type="helix" evidence="16">
    <location>
        <begin position="6"/>
        <end position="9"/>
    </location>
</feature>
<feature type="turn" evidence="16">
    <location>
        <begin position="10"/>
        <end position="13"/>
    </location>
</feature>
<feature type="strand" evidence="16">
    <location>
        <begin position="15"/>
        <end position="18"/>
    </location>
</feature>
<feature type="helix" evidence="16">
    <location>
        <begin position="19"/>
        <end position="22"/>
    </location>
</feature>
<feature type="strand" evidence="16">
    <location>
        <begin position="26"/>
        <end position="30"/>
    </location>
</feature>
<feature type="helix" evidence="16">
    <location>
        <begin position="31"/>
        <end position="39"/>
    </location>
</feature>
<feature type="strand" evidence="16">
    <location>
        <begin position="45"/>
        <end position="47"/>
    </location>
</feature>
<feature type="helix" evidence="16">
    <location>
        <begin position="51"/>
        <end position="65"/>
    </location>
</feature>
<feature type="strand" evidence="16">
    <location>
        <begin position="69"/>
        <end position="74"/>
    </location>
</feature>
<feature type="helix" evidence="16">
    <location>
        <begin position="101"/>
        <end position="124"/>
    </location>
</feature>
<feature type="strand" evidence="16">
    <location>
        <begin position="128"/>
        <end position="130"/>
    </location>
</feature>
<feature type="helix" evidence="16">
    <location>
        <begin position="135"/>
        <end position="144"/>
    </location>
</feature>
<feature type="strand" evidence="16">
    <location>
        <begin position="149"/>
        <end position="152"/>
    </location>
</feature>
<feature type="turn" evidence="16">
    <location>
        <begin position="158"/>
        <end position="162"/>
    </location>
</feature>
<feature type="strand" evidence="16">
    <location>
        <begin position="164"/>
        <end position="171"/>
    </location>
</feature>
<feature type="strand" evidence="16">
    <location>
        <begin position="178"/>
        <end position="183"/>
    </location>
</feature>
<feature type="helix" evidence="16">
    <location>
        <begin position="184"/>
        <end position="190"/>
    </location>
</feature>
<feature type="helix" evidence="16">
    <location>
        <begin position="195"/>
        <end position="205"/>
    </location>
</feature>
<feature type="helix" evidence="16">
    <location>
        <begin position="221"/>
        <end position="227"/>
    </location>
</feature>
<feature type="helix" evidence="16">
    <location>
        <begin position="233"/>
        <end position="241"/>
    </location>
</feature>
<feature type="helix" evidence="16">
    <location>
        <begin position="311"/>
        <end position="322"/>
    </location>
</feature>
<feature type="helix" evidence="16">
    <location>
        <begin position="329"/>
        <end position="336"/>
    </location>
</feature>
<feature type="helix" evidence="16">
    <location>
        <begin position="353"/>
        <end position="364"/>
    </location>
</feature>
<feature type="helix" evidence="16">
    <location>
        <begin position="368"/>
        <end position="389"/>
    </location>
</feature>
<feature type="strand" evidence="16">
    <location>
        <begin position="399"/>
        <end position="408"/>
    </location>
</feature>
<feature type="strand" evidence="16">
    <location>
        <begin position="411"/>
        <end position="418"/>
    </location>
</feature>
<feature type="turn" evidence="16">
    <location>
        <begin position="429"/>
        <end position="431"/>
    </location>
</feature>
<feature type="helix" evidence="16">
    <location>
        <begin position="432"/>
        <end position="435"/>
    </location>
</feature>
<feature type="strand" evidence="16">
    <location>
        <begin position="437"/>
        <end position="441"/>
    </location>
</feature>
<feature type="helix" evidence="16">
    <location>
        <begin position="442"/>
        <end position="448"/>
    </location>
</feature>
<feature type="helix" evidence="16">
    <location>
        <begin position="450"/>
        <end position="466"/>
    </location>
</feature>
<sequence length="908" mass="102884">MGVNDLWQILEPVKQHIPLRNLGGKTIAVDLSLWVCEAQTVKKMMGSVMKPHLRNLFFRISYLTQMDVKLVFVMEGEPPKLKADVISKRNQSRYGSSGKSWSQKTGRSHFKSVLRECLHMLECLGIPWVQAAGEAEAMCAYLNAGGHVDGCLTNDGDTFLYGAQTVYRNFTMNTKDPHVDCYTMSSIKSKLGLDRDALVGLAILLGCDYLPKGVPGVGKEQALKLIQILKGQSLLQRFNRWNETSCNSSPQLLVTKKLAHCSVCSHPGSPKDHERNGCRLCKSDKYCEPHDYEYCCPCEWHRTEHDRQLSEVENNIKKKACCCEGFPFHEVIQEFLLNKDKLVKVIRYQRPDLLLFQRFTLEKMEWPNHYACEKLLVLLTHYDMIERKLGSRNSNQLQPIRIVKTRIRNGVHCFEIEWEKPEHYAMEDKQHGEFALLTIEEESLFEAAYPEIVAVYQKQKLEIKGKKQKRIKPKENNLPEPDEVMSFQSHMTLKPTCEIFHKQNSKLNSGISPDPTLPQESISASLNSLLLPKNTPCLNAQEQFMSSLRPLAIQQIKAVSKSLISESSQPNTSSHNISVIADLHLSTIDWEGTSFSNSPAIQRNTFSHDLKSEVESELSAIPDGFENIPEQLSCESERYTANIKKVLDEDSDGISPEEHLLSGITDLCLQDLPLKERIFTKLSYPQDNLQPDVNLKTLSILSVKESCIANSGSDCTSHLSKDLPGIPLQNESRDSKILKGDQLLQEDYKVNTSVPYSVSNTVVKTCNVRPPNTALDHSRKVDMQTTRKILMKKSVCLDRHSSDEQSAPVFGKAKYTTQRMKHSSQKHNSSHFKESGHNKLSSPKIHIKETEQCVRSYETAENEESCFPDSTKSSLSSLQCHKKENNSGTCLDSPLPLRQRLKLRFQST</sequence>
<gene>
    <name type="primary">GEN1</name>
</gene>
<protein>
    <recommendedName>
        <fullName>Flap endonuclease GEN homolog 1</fullName>
        <ecNumber>3.1.-.-</ecNumber>
    </recommendedName>
</protein>